<protein>
    <recommendedName>
        <fullName evidence="1">Regulatory protein RecX</fullName>
    </recommendedName>
</protein>
<accession>B7HU51</accession>
<sequence>MAVITKIEVQKRSKERFNIYIDKGQGEEYGFSVNEVILIKHGLQKGLEIDEIALGNILYNEEVQKAYLQAISYLSYQMRTKLEIEDFLRKKEVGQAIISEVVSKLLHDRYINDKEYAILYTRTQSNVNRKGPTVIKRELLNKGVQDLIITHSLQEYPKEKQIENALILIEKKKKSYQKHSFLQMKLKLDEMLVRKGYSRDVIQICLEELKDEKDDEKQREALHYHGNKYYEKYKKYDGWTFENKMKQALYRKGFSIDEIEIFLQMKREEG</sequence>
<gene>
    <name evidence="1" type="primary">recX</name>
    <name type="ordered locus">BCAH187_A0572</name>
</gene>
<organism>
    <name type="scientific">Bacillus cereus (strain AH187)</name>
    <dbReference type="NCBI Taxonomy" id="405534"/>
    <lineage>
        <taxon>Bacteria</taxon>
        <taxon>Bacillati</taxon>
        <taxon>Bacillota</taxon>
        <taxon>Bacilli</taxon>
        <taxon>Bacillales</taxon>
        <taxon>Bacillaceae</taxon>
        <taxon>Bacillus</taxon>
        <taxon>Bacillus cereus group</taxon>
    </lineage>
</organism>
<keyword id="KW-0963">Cytoplasm</keyword>
<feature type="chain" id="PRO_1000137154" description="Regulatory protein RecX">
    <location>
        <begin position="1"/>
        <end position="270"/>
    </location>
</feature>
<name>RECX_BACC7</name>
<comment type="function">
    <text evidence="1">Modulates RecA activity.</text>
</comment>
<comment type="subcellular location">
    <subcellularLocation>
        <location evidence="1">Cytoplasm</location>
    </subcellularLocation>
</comment>
<comment type="similarity">
    <text evidence="1">Belongs to the RecX family.</text>
</comment>
<evidence type="ECO:0000255" key="1">
    <source>
        <dbReference type="HAMAP-Rule" id="MF_01114"/>
    </source>
</evidence>
<proteinExistence type="inferred from homology"/>
<dbReference type="EMBL" id="CP001177">
    <property type="protein sequence ID" value="ACJ79919.1"/>
    <property type="molecule type" value="Genomic_DNA"/>
</dbReference>
<dbReference type="SMR" id="B7HU51"/>
<dbReference type="KEGG" id="bcr:BCAH187_A0572"/>
<dbReference type="HOGENOM" id="CLU_066607_4_0_9"/>
<dbReference type="Proteomes" id="UP000002214">
    <property type="component" value="Chromosome"/>
</dbReference>
<dbReference type="GO" id="GO:0005737">
    <property type="term" value="C:cytoplasm"/>
    <property type="evidence" value="ECO:0007669"/>
    <property type="project" value="UniProtKB-SubCell"/>
</dbReference>
<dbReference type="GO" id="GO:0006282">
    <property type="term" value="P:regulation of DNA repair"/>
    <property type="evidence" value="ECO:0007669"/>
    <property type="project" value="UniProtKB-UniRule"/>
</dbReference>
<dbReference type="Gene3D" id="1.10.10.10">
    <property type="entry name" value="Winged helix-like DNA-binding domain superfamily/Winged helix DNA-binding domain"/>
    <property type="match status" value="4"/>
</dbReference>
<dbReference type="HAMAP" id="MF_01114">
    <property type="entry name" value="RecX"/>
    <property type="match status" value="1"/>
</dbReference>
<dbReference type="InterPro" id="IPR053926">
    <property type="entry name" value="RecX_HTH_1st"/>
</dbReference>
<dbReference type="InterPro" id="IPR053924">
    <property type="entry name" value="RecX_HTH_2nd"/>
</dbReference>
<dbReference type="InterPro" id="IPR053925">
    <property type="entry name" value="RecX_HTH_3rd"/>
</dbReference>
<dbReference type="InterPro" id="IPR003783">
    <property type="entry name" value="Regulatory_RecX"/>
</dbReference>
<dbReference type="InterPro" id="IPR036388">
    <property type="entry name" value="WH-like_DNA-bd_sf"/>
</dbReference>
<dbReference type="NCBIfam" id="NF010733">
    <property type="entry name" value="PRK14135.1"/>
    <property type="match status" value="1"/>
</dbReference>
<dbReference type="PANTHER" id="PTHR33602">
    <property type="entry name" value="REGULATORY PROTEIN RECX FAMILY PROTEIN"/>
    <property type="match status" value="1"/>
</dbReference>
<dbReference type="PANTHER" id="PTHR33602:SF1">
    <property type="entry name" value="REGULATORY PROTEIN RECX FAMILY PROTEIN"/>
    <property type="match status" value="1"/>
</dbReference>
<dbReference type="Pfam" id="PF21982">
    <property type="entry name" value="RecX_HTH1"/>
    <property type="match status" value="1"/>
</dbReference>
<dbReference type="Pfam" id="PF02631">
    <property type="entry name" value="RecX_HTH2"/>
    <property type="match status" value="1"/>
</dbReference>
<dbReference type="Pfam" id="PF21981">
    <property type="entry name" value="RecX_HTH3"/>
    <property type="match status" value="2"/>
</dbReference>
<reference key="1">
    <citation type="submission" date="2008-10" db="EMBL/GenBank/DDBJ databases">
        <title>Genome sequence of Bacillus cereus AH187.</title>
        <authorList>
            <person name="Dodson R.J."/>
            <person name="Durkin A.S."/>
            <person name="Rosovitz M.J."/>
            <person name="Rasko D.A."/>
            <person name="Kolsto A.B."/>
            <person name="Okstad O.A."/>
            <person name="Ravel J."/>
            <person name="Sutton G."/>
        </authorList>
    </citation>
    <scope>NUCLEOTIDE SEQUENCE [LARGE SCALE GENOMIC DNA]</scope>
    <source>
        <strain>AH187</strain>
    </source>
</reference>